<gene>
    <name evidence="4" type="primary">CFAP54</name>
    <name evidence="3" type="synonym">FAP54</name>
    <name evidence="5" type="ORF">CHLREDRAFT_150841</name>
</gene>
<organism>
    <name type="scientific">Chlamydomonas reinhardtii</name>
    <name type="common">Chlamydomonas smithii</name>
    <dbReference type="NCBI Taxonomy" id="3055"/>
    <lineage>
        <taxon>Eukaryota</taxon>
        <taxon>Viridiplantae</taxon>
        <taxon>Chlorophyta</taxon>
        <taxon>core chlorophytes</taxon>
        <taxon>Chlorophyceae</taxon>
        <taxon>CS clade</taxon>
        <taxon>Chlamydomonadales</taxon>
        <taxon>Chlamydomonadaceae</taxon>
        <taxon>Chlamydomonas</taxon>
    </lineage>
</organism>
<name>CFA54_CHLRE</name>
<dbReference type="EMBL" id="JF827825">
    <property type="protein sequence ID" value="AFG30957.1"/>
    <property type="molecule type" value="mRNA"/>
</dbReference>
<dbReference type="EMBL" id="DS496138">
    <property type="protein sequence ID" value="EDP00642.1"/>
    <property type="molecule type" value="Genomic_DNA"/>
</dbReference>
<dbReference type="RefSeq" id="XP_001696950.1">
    <property type="nucleotide sequence ID" value="XM_001696898.1"/>
</dbReference>
<dbReference type="PDB" id="7N6G">
    <property type="method" value="EM"/>
    <property type="resolution" value="3.60 A"/>
    <property type="chains" value="1O=1-3081"/>
</dbReference>
<dbReference type="PDB" id="7SQC">
    <property type="method" value="EM"/>
    <property type="resolution" value="3.80 A"/>
    <property type="chains" value="Q0/Q1=1-3081"/>
</dbReference>
<dbReference type="PDBsum" id="7N6G"/>
<dbReference type="PDBsum" id="7SQC"/>
<dbReference type="EMDB" id="EMD-24207"/>
<dbReference type="EMDB" id="EMD-25381"/>
<dbReference type="SMR" id="A8J666"/>
<dbReference type="PaxDb" id="3055-EDP00642"/>
<dbReference type="eggNOG" id="ENOG502QVDY">
    <property type="taxonomic scope" value="Eukaryota"/>
</dbReference>
<dbReference type="HOGENOM" id="CLU_225847_0_0_1"/>
<dbReference type="OMA" id="YWLVLNG"/>
<dbReference type="GO" id="GO:1990716">
    <property type="term" value="C:axonemal central apparatus"/>
    <property type="evidence" value="ECO:0000314"/>
    <property type="project" value="UniProtKB"/>
</dbReference>
<dbReference type="GO" id="GO:0005930">
    <property type="term" value="C:axoneme"/>
    <property type="evidence" value="ECO:0000314"/>
    <property type="project" value="UniProtKB"/>
</dbReference>
<dbReference type="InterPro" id="IPR027912">
    <property type="entry name" value="CFAP54"/>
</dbReference>
<dbReference type="PANTHER" id="PTHR33487">
    <property type="entry name" value="CILIA- AND FLAGELLA-ASSOCIATED PROTEIN 54"/>
    <property type="match status" value="1"/>
</dbReference>
<dbReference type="PANTHER" id="PTHR33487:SF1">
    <property type="entry name" value="CILIA- AND FLAGELLA-ASSOCIATED PROTEIN 54"/>
    <property type="match status" value="1"/>
</dbReference>
<dbReference type="Pfam" id="PF14858">
    <property type="entry name" value="CFAP54_N"/>
    <property type="match status" value="1"/>
</dbReference>
<evidence type="ECO:0000256" key="1">
    <source>
        <dbReference type="SAM" id="MobiDB-lite"/>
    </source>
</evidence>
<evidence type="ECO:0000269" key="2">
    <source>
    </source>
</evidence>
<evidence type="ECO:0000303" key="3">
    <source>
    </source>
</evidence>
<evidence type="ECO:0000305" key="4"/>
<evidence type="ECO:0000312" key="5">
    <source>
        <dbReference type="EMBL" id="EDP00642.1"/>
    </source>
</evidence>
<sequence length="3081" mass="317779">MASEVIALCHSFEQELAKSLNVLPPVSASKPDAHDAHLNHHRLSQRIAESVSYYAGRLPAYASVPRILVFGDKLFRAEQYQLALQACYKHIRGLELHSSRENLPRMDAQARLSSHVQACFGCAACEAALLLASDGSVKHPDTLQWLVSCLAQLRAAMSLALPDERLYWLVLNGTVHVYGIAKAMITAGFAEQALPALVFCIKALEGHVAFAAPKYLPWRTQLYTWAVYGLADCGAVEQARALLADGLKRLEMLVALQKLDPVPAAPAVQAAFAAARGALVGLQLRVEMAAGAAVTPVLAQLSAGAAGAGAVGAAGPTARAGLAALVEALHVPHRRVVRTEAVSGGPLKELFDAAMAVAAPLIGDLKKATEAAAAADAAAAAAAVAADAASAEAETAGGADAAAPADTGAQQQASAAAAAADEAAVAASAALGAAQEALPCALHKGLLCAAYNLEQWKQFEELASLATSRSDVVYADAVPTGTGSTTTTAAAAADVDQTAAQLGTAASILTALRQLSTAPGVESLRTLAAMLQQALSRGITVSGTAGAAPPPPPRRVSMTGMLAGGSASPPNGSSGAGGAAATLTATAAGITQTAGSPSHNGGAAGATASAGGGAAGAPPRPQQSSLAPWQQLRDLIADASLALYGSARPLIDGVFCADDKEAGLVAELLAACHSAWAAVELDDGELRVAAALKLALLLEEEGRLLAAREVLMQAKSVVEQSRVELMVANRRAPDEHLRWVTASRSQPSDDTAALVQGMTASEQELACLQVDVLALLARVELGLGVSEQQGRATARRTAVMEEQAKRTAQSSIFGQRNAAELARDEARLVAAGATPPNPQMKERELLTACAKNPYERAVVLMQMTSFQGADAGRKTQLLQEAGDLLVKAQAAEDGLFAAQQPDLRARRDVPPQPKLLQRSPTSVTLVAHPPGPGLKQPPGARKPPSRYVAYCKSFGAGVGLSINKTATEYPGSGVSVPLGQPVTIQVALPCTLPQLRAPFLEEQVARLKSARLLVLGMEVAALLPDEPLMQEGALRTYGLLAPLLALRAPRSHLLHKALAACHAVLASLTNLVQDSLYRQEHQRSLAARVAAAVTYQLLRLSDEAGEVGAAAHFGRLQLELLKAYDPRFALAGRPALLPGAELQEEASQLHDVLLQHPKLSEWAPEPLVERQKDASDLVARVLPVLGTPAPMDTWSQALGFETAAEHPRWVELVVRMVEAAVRKGNPGNATVVAEQLTWWVRARLRRPPPPPLDAYEAEAAEAAAAGGTAPPWPAKWKLEEAAAALDAATVAASFEPPPVPSTEGMSPEEASAALARHAAVAAAAEATARQRLAAVLLLQKRMPALLARKRLIEKMRENRKRWSPWMARLNLVLGLQAAADARRYAANAPARARAAAAAAEAAAAAADAPGPETSGVAGSRPGTAAVNMPPPVPDPSAAGPPPLTPPEGITPPLQAMMHFARAAHLAARGGAWVEVGNAARHAWNLARATLSADPALTAPLPPVRWERGDAPQPAVAPESILVPAGAGDAGGKKGSKKGGKDDKKKDDKAPAKTPSSPKGGARSSARSKKGFPVEEAPPPPRTYPVVVGARPNMQRAARSLADAVLELVSALRDGLQVYTWVAPVNPRHRFDGPPPRRAALAASASTAGAGLGEEERPVTARVTDSEFSYGSDLQADIWFKEGPLDLAWVSRFLGLAAVVLSRGERWHALVEAGRQWARLSEGAFNERIMPWLLQAAPKAGVDPAPFQSAMDALIRDKNQALDQLDKVRTLVRERLGDTPLMAQSMGHKVRKRKTRAAILAAGPGSGAGGGGGSGLPDSDRASLVSAAYTYRTASTYKTKASQPDFLRIPGEYEKVIEVLKRRNEKGAMLLALHELGDVHAHFGNWGGAATSWNDTLDTLLGPYQALRNWRGRLDGMSPAGTLQAYGLHGLLLGCVLAGKLARYVHHDHLHLRLEAHRLTARLAFCAFSAHLGHPQRRAGFATYTPRELWAAGTDAWLVWSDPYRCPVVDLAGALEGAAAALLDAGLALEALPVLALWEHVTRHVLRNLHGTVLCRLLRVRALVALGLLAEAVEVTGGLMGAAALPDPTLDSDYVLKDTSGAVVEPVPAPPYDNSKLPGEPGNKAALTHIADTPLAPAVEKLYGSWLVAHLALARAQVLMLAGSVPNQWRGVDWRTGERTAAPKPASPAKGAAKGAAAAAPEPPGAGLPEPVEPVMLERAHVLLRKALAMASGEDQPPSEEPSSAGKPAAAGKPAPARAPSPGRAKSPTGKGKGKGGAGDGAGSAAAAPPEVPGPPPPPPPSASQRAEVNVRALLLMSELEQLRWMPSRGLAHALEAARFLGEHADHVNTPQQTDNDELERYTLAPALWFLARGAAVRCAAALGHAAHVHELVAAATSAHAPSEPGSAKVPSGLPELLHCTGMAHVAALTLAAEGRTSDALAALAAVAARYRSLCVYDGRLAAVLLDAAALRDRLGLREDAAELTAQGLAVAEGYCLELGLGEALEAPELTNVYLDGTALYAHALGAAAVHASRRQQHAEAERCAARAVLLLRSHTRALPATHAAALLLLGRTCRMVALCGDGVPVDGQPTLASGAPPASTATLTSAGAGAPGDPAATAVAAGTARAAAGGFNASAGALARTATAGRGGGSAGSSGGGVAATAAKLSAARSALCASITLAAVDGGHLRSLMRGALLELGSIFIAGLDARSAAACLRAGHAAAAKADLVALSSHTLAPVAAAQLPDWALAHVRGQEALFGKKSSNGAISGAAGAAGSARPVATSSSGARPPGTPPGGKPGAGGGSGDGLSDADAARMVFCLLGGLLKGLEALPVGGGARARGEAQVAALHAALRAACAKYGTDACFAEPPLPPSPPDAVPPPPEGSVIVQWHCQDGCWQEARSWRAEGSSGAPDGPLSDSALLALQPVPAYASLLFVVAAPSHDGSPGPHCGEVTFAVKDVRELQRRAKALRARVEAPKAATDILGYAAPSQVELGELLRAAERLLSAVPRNSEDGSSSAGFSAADSGLGGFGSSELMEGEVRPELDVAFLCKLEALLALEAGLDVNDKTLGSWLVQTLPVMM</sequence>
<reference key="1">
    <citation type="journal article" date="2012" name="J. Cell Sci.">
        <title>A FAP46 mutant provides new insights into the function and assembly of the C1d complex of the ciliary central apparatus.</title>
        <authorList>
            <person name="Brown J.M."/>
            <person name="DiPetrillo C.G."/>
            <person name="Smith E.F."/>
            <person name="Witman G.B."/>
        </authorList>
    </citation>
    <scope>NUCLEOTIDE SEQUENCE [MRNA] (ISOFORM 2)</scope>
</reference>
<reference key="2">
    <citation type="journal article" date="2007" name="Science">
        <title>The Chlamydomonas genome reveals the evolution of key animal and plant functions.</title>
        <authorList>
            <person name="Merchant S.S."/>
            <person name="Prochnik S.E."/>
            <person name="Vallon O."/>
            <person name="Harris E.H."/>
            <person name="Karpowicz S.J."/>
            <person name="Witman G.B."/>
            <person name="Terry A."/>
            <person name="Salamov A."/>
            <person name="Fritz-Laylin L.K."/>
            <person name="Marechal-Drouard L."/>
            <person name="Marshall W.F."/>
            <person name="Qu L.H."/>
            <person name="Nelson D.R."/>
            <person name="Sanderfoot A.A."/>
            <person name="Spalding M.H."/>
            <person name="Kapitonov V.V."/>
            <person name="Ren Q."/>
            <person name="Ferris P."/>
            <person name="Lindquist E."/>
            <person name="Shapiro H."/>
            <person name="Lucas S.M."/>
            <person name="Grimwood J."/>
            <person name="Schmutz J."/>
            <person name="Cardol P."/>
            <person name="Cerutti H."/>
            <person name="Chanfreau G."/>
            <person name="Chen C.L."/>
            <person name="Cognat V."/>
            <person name="Croft M.T."/>
            <person name="Dent R."/>
            <person name="Dutcher S."/>
            <person name="Fernandez E."/>
            <person name="Fukuzawa H."/>
            <person name="Gonzalez-Ballester D."/>
            <person name="Gonzalez-Halphen D."/>
            <person name="Hallmann A."/>
            <person name="Hanikenne M."/>
            <person name="Hippler M."/>
            <person name="Inwood W."/>
            <person name="Jabbari K."/>
            <person name="Kalanon M."/>
            <person name="Kuras R."/>
            <person name="Lefebvre P.A."/>
            <person name="Lemaire S.D."/>
            <person name="Lobanov A.V."/>
            <person name="Lohr M."/>
            <person name="Manuell A."/>
            <person name="Meier I."/>
            <person name="Mets L."/>
            <person name="Mittag M."/>
            <person name="Mittelmeier T."/>
            <person name="Moroney J.V."/>
            <person name="Moseley J."/>
            <person name="Napoli C."/>
            <person name="Nedelcu A.M."/>
            <person name="Niyogi K."/>
            <person name="Novoselov S.V."/>
            <person name="Paulsen I.T."/>
            <person name="Pazour G.J."/>
            <person name="Purton S."/>
            <person name="Ral J.P."/>
            <person name="Riano-Pachon D.M."/>
            <person name="Riekhof W."/>
            <person name="Rymarquis L."/>
            <person name="Schroda M."/>
            <person name="Stern D."/>
            <person name="Umen J."/>
            <person name="Willows R."/>
            <person name="Wilson N."/>
            <person name="Zimmer S.L."/>
            <person name="Allmer J."/>
            <person name="Balk J."/>
            <person name="Bisova K."/>
            <person name="Chen C.J."/>
            <person name="Elias M."/>
            <person name="Gendler K."/>
            <person name="Hauser C."/>
            <person name="Lamb M.R."/>
            <person name="Ledford H."/>
            <person name="Long J.C."/>
            <person name="Minagawa J."/>
            <person name="Page M.D."/>
            <person name="Pan J."/>
            <person name="Pootakham W."/>
            <person name="Roje S."/>
            <person name="Rose A."/>
            <person name="Stahlberg E."/>
            <person name="Terauchi A.M."/>
            <person name="Yang P."/>
            <person name="Ball S."/>
            <person name="Bowler C."/>
            <person name="Dieckmann C.L."/>
            <person name="Gladyshev V.N."/>
            <person name="Green P."/>
            <person name="Jorgensen R."/>
            <person name="Mayfield S."/>
            <person name="Mueller-Roeber B."/>
            <person name="Rajamani S."/>
            <person name="Sayre R.T."/>
            <person name="Brokstein P."/>
            <person name="Dubchak I."/>
            <person name="Goodstein D."/>
            <person name="Hornick L."/>
            <person name="Huang Y.W."/>
            <person name="Jhaveri J."/>
            <person name="Luo Y."/>
            <person name="Martinez D."/>
            <person name="Ngau W.C."/>
            <person name="Otillar B."/>
            <person name="Poliakov A."/>
            <person name="Porter A."/>
            <person name="Szajkowski L."/>
            <person name="Werner G."/>
            <person name="Zhou K."/>
            <person name="Grigoriev I.V."/>
            <person name="Rokhsar D.S."/>
            <person name="Grossman A.R."/>
        </authorList>
    </citation>
    <scope>NUCLEOTIDE SEQUENCE [LARGE SCALE GENOMIC DNA]</scope>
    <source>
        <strain>CC-503</strain>
    </source>
</reference>
<reference key="3">
    <citation type="journal article" date="2010" name="J. Cell Biol.">
        <title>Pcdp1 is a central apparatus protein that binds Ca2+-calmodulin and regulates ciliary motility.</title>
        <authorList>
            <person name="DiPetrillo C.G."/>
            <person name="Smith E.F."/>
        </authorList>
    </citation>
    <scope>SUBUNIT</scope>
    <scope>SUBCELLULAR LOCATION</scope>
</reference>
<protein>
    <recommendedName>
        <fullName evidence="4">Cilia- and flagella-associated protein 54</fullName>
    </recommendedName>
    <alternativeName>
        <fullName evidence="3">Flagella-associated protein 54</fullName>
    </alternativeName>
</protein>
<proteinExistence type="evidence at protein level"/>
<keyword id="KW-0002">3D-structure</keyword>
<keyword id="KW-0025">Alternative splicing</keyword>
<keyword id="KW-0966">Cell projection</keyword>
<keyword id="KW-0969">Cilium</keyword>
<keyword id="KW-0963">Cytoplasm</keyword>
<keyword id="KW-0206">Cytoskeleton</keyword>
<feature type="chain" id="PRO_0000431704" description="Cilia- and flagella-associated protein 54">
    <location>
        <begin position="1"/>
        <end position="3081"/>
    </location>
</feature>
<feature type="region of interest" description="Disordered" evidence="1">
    <location>
        <begin position="542"/>
        <end position="579"/>
    </location>
</feature>
<feature type="region of interest" description="Disordered" evidence="1">
    <location>
        <begin position="591"/>
        <end position="626"/>
    </location>
</feature>
<feature type="region of interest" description="Disordered" evidence="1">
    <location>
        <begin position="910"/>
        <end position="942"/>
    </location>
</feature>
<feature type="region of interest" description="Disordered" evidence="1">
    <location>
        <begin position="1406"/>
        <end position="1451"/>
    </location>
</feature>
<feature type="region of interest" description="Disordered" evidence="1">
    <location>
        <begin position="1518"/>
        <end position="1586"/>
    </location>
</feature>
<feature type="region of interest" description="Disordered" evidence="1">
    <location>
        <begin position="1636"/>
        <end position="1657"/>
    </location>
</feature>
<feature type="region of interest" description="Disordered" evidence="1">
    <location>
        <begin position="2176"/>
        <end position="2210"/>
    </location>
</feature>
<feature type="region of interest" description="Disordered" evidence="1">
    <location>
        <begin position="2229"/>
        <end position="2306"/>
    </location>
</feature>
<feature type="region of interest" description="Disordered" evidence="1">
    <location>
        <begin position="2776"/>
        <end position="2806"/>
    </location>
</feature>
<feature type="compositionally biased region" description="Low complexity" evidence="1">
    <location>
        <begin position="564"/>
        <end position="579"/>
    </location>
</feature>
<feature type="compositionally biased region" description="Pro residues" evidence="1">
    <location>
        <begin position="1428"/>
        <end position="1449"/>
    </location>
</feature>
<feature type="compositionally biased region" description="Basic and acidic residues" evidence="1">
    <location>
        <begin position="1538"/>
        <end position="1550"/>
    </location>
</feature>
<feature type="compositionally biased region" description="Low complexity" evidence="1">
    <location>
        <begin position="1638"/>
        <end position="1648"/>
    </location>
</feature>
<feature type="compositionally biased region" description="Low complexity" evidence="1">
    <location>
        <begin position="2181"/>
        <end position="2199"/>
    </location>
</feature>
<feature type="compositionally biased region" description="Low complexity" evidence="1">
    <location>
        <begin position="2240"/>
        <end position="2269"/>
    </location>
</feature>
<feature type="compositionally biased region" description="Pro residues" evidence="1">
    <location>
        <begin position="2289"/>
        <end position="2301"/>
    </location>
</feature>
<feature type="compositionally biased region" description="Low complexity" evidence="1">
    <location>
        <begin position="2776"/>
        <end position="2788"/>
    </location>
</feature>
<feature type="compositionally biased region" description="Gly residues" evidence="1">
    <location>
        <begin position="2796"/>
        <end position="2805"/>
    </location>
</feature>
<feature type="splice variant" id="VSP_057368" description="In isoform 2.">
    <original>I</original>
    <variation>IQGLRTNDTYLFAVALYDDDGNIVGGLGTSTPEVLVALPLPLLMCWTHLLAAAVRCGAAGAAAAKRAASVLLPHFVVTTPDVPLWRSNPMDAQRLHRAHVAAAARPLLRALVQAIYLYGGAALLRNGGGGGGGGGGSTAPGAPVP</variation>
    <location>
        <position position="984"/>
    </location>
</feature>
<feature type="sequence conflict" description="In Ref. 1; AFG30957." evidence="4" ref="1">
    <original>E</original>
    <variation>G</variation>
    <location>
        <position position="15"/>
    </location>
</feature>
<feature type="sequence conflict" description="In Ref. 1; AFG30957." evidence="4" ref="1">
    <original>A</original>
    <variation>E</variation>
    <location>
        <position position="62"/>
    </location>
</feature>
<feature type="sequence conflict" description="In Ref. 1; AFG30957." evidence="4" ref="1">
    <original>V</original>
    <variation>A</variation>
    <location>
        <position position="336"/>
    </location>
</feature>
<feature type="sequence conflict" description="In Ref. 1; AFG30957." evidence="4" ref="1">
    <original>A</original>
    <variation>V</variation>
    <location>
        <position position="2286"/>
    </location>
</feature>
<feature type="sequence conflict" description="In Ref. 1; AFG30957." evidence="4" ref="1">
    <original>L</original>
    <variation>P</variation>
    <location>
        <position position="2313"/>
    </location>
</feature>
<feature type="sequence conflict" description="In Ref. 1; AFG30957." evidence="4" ref="1">
    <original>A</original>
    <variation>V</variation>
    <location>
        <position position="2337"/>
    </location>
</feature>
<accession>A8J666</accession>
<accession>J7F8V0</accession>
<comment type="subunit">
    <text evidence="2">Part of the PDCP1 complex composed of CFAP46, CFAP54, CFAP74 and CFAP221; the PDCP1 complex binds calmodulin.</text>
</comment>
<comment type="subcellular location">
    <subcellularLocation>
        <location evidence="2">Cytoplasm</location>
        <location evidence="2">Cytoskeleton</location>
        <location evidence="2">Cilium axoneme</location>
    </subcellularLocation>
</comment>
<comment type="alternative products">
    <event type="alternative splicing"/>
    <isoform>
        <id>A8J666-1</id>
        <name>1</name>
        <sequence type="displayed"/>
    </isoform>
    <isoform>
        <id>A8J666-2</id>
        <name>2</name>
        <sequence type="described" ref="VSP_057368"/>
    </isoform>
</comment>
<comment type="miscellaneous">
    <molecule>Isoform 1</molecule>
    <text>Gene prediction.</text>
</comment>
<comment type="similarity">
    <text evidence="4">Belongs to the CFAP54 family.</text>
</comment>